<keyword id="KW-0028">Amino-acid biosynthesis</keyword>
<keyword id="KW-0963">Cytoplasm</keyword>
<keyword id="KW-0521">NADP</keyword>
<keyword id="KW-0560">Oxidoreductase</keyword>
<keyword id="KW-0641">Proline biosynthesis</keyword>
<dbReference type="EC" id="1.2.1.41" evidence="1"/>
<dbReference type="EMBL" id="AM421808">
    <property type="protein sequence ID" value="CAM10294.1"/>
    <property type="molecule type" value="Genomic_DNA"/>
</dbReference>
<dbReference type="RefSeq" id="WP_002221044.1">
    <property type="nucleotide sequence ID" value="NC_008767.1"/>
</dbReference>
<dbReference type="SMR" id="A1KTV4"/>
<dbReference type="KEGG" id="nmc:NMC1032"/>
<dbReference type="HOGENOM" id="CLU_030231_0_0_4"/>
<dbReference type="UniPathway" id="UPA00098">
    <property type="reaction ID" value="UER00360"/>
</dbReference>
<dbReference type="Proteomes" id="UP000002286">
    <property type="component" value="Chromosome"/>
</dbReference>
<dbReference type="GO" id="GO:0005737">
    <property type="term" value="C:cytoplasm"/>
    <property type="evidence" value="ECO:0007669"/>
    <property type="project" value="UniProtKB-SubCell"/>
</dbReference>
<dbReference type="GO" id="GO:0004350">
    <property type="term" value="F:glutamate-5-semialdehyde dehydrogenase activity"/>
    <property type="evidence" value="ECO:0007669"/>
    <property type="project" value="UniProtKB-UniRule"/>
</dbReference>
<dbReference type="GO" id="GO:0050661">
    <property type="term" value="F:NADP binding"/>
    <property type="evidence" value="ECO:0007669"/>
    <property type="project" value="InterPro"/>
</dbReference>
<dbReference type="GO" id="GO:0055129">
    <property type="term" value="P:L-proline biosynthetic process"/>
    <property type="evidence" value="ECO:0007669"/>
    <property type="project" value="UniProtKB-UniRule"/>
</dbReference>
<dbReference type="CDD" id="cd07079">
    <property type="entry name" value="ALDH_F18-19_ProA-GPR"/>
    <property type="match status" value="1"/>
</dbReference>
<dbReference type="FunFam" id="3.40.309.10:FF:000006">
    <property type="entry name" value="Gamma-glutamyl phosphate reductase"/>
    <property type="match status" value="1"/>
</dbReference>
<dbReference type="Gene3D" id="3.40.605.10">
    <property type="entry name" value="Aldehyde Dehydrogenase, Chain A, domain 1"/>
    <property type="match status" value="1"/>
</dbReference>
<dbReference type="Gene3D" id="3.40.309.10">
    <property type="entry name" value="Aldehyde Dehydrogenase, Chain A, domain 2"/>
    <property type="match status" value="1"/>
</dbReference>
<dbReference type="HAMAP" id="MF_00412">
    <property type="entry name" value="ProA"/>
    <property type="match status" value="1"/>
</dbReference>
<dbReference type="InterPro" id="IPR016161">
    <property type="entry name" value="Ald_DH/histidinol_DH"/>
</dbReference>
<dbReference type="InterPro" id="IPR016163">
    <property type="entry name" value="Ald_DH_C"/>
</dbReference>
<dbReference type="InterPro" id="IPR016162">
    <property type="entry name" value="Ald_DH_N"/>
</dbReference>
<dbReference type="InterPro" id="IPR015590">
    <property type="entry name" value="Aldehyde_DH_dom"/>
</dbReference>
<dbReference type="InterPro" id="IPR020593">
    <property type="entry name" value="G-glutamylP_reductase_CS"/>
</dbReference>
<dbReference type="InterPro" id="IPR012134">
    <property type="entry name" value="Glu-5-SA_DH"/>
</dbReference>
<dbReference type="InterPro" id="IPR000965">
    <property type="entry name" value="GPR_dom"/>
</dbReference>
<dbReference type="NCBIfam" id="NF001221">
    <property type="entry name" value="PRK00197.1"/>
    <property type="match status" value="1"/>
</dbReference>
<dbReference type="NCBIfam" id="TIGR00407">
    <property type="entry name" value="proA"/>
    <property type="match status" value="1"/>
</dbReference>
<dbReference type="PANTHER" id="PTHR11063:SF8">
    <property type="entry name" value="DELTA-1-PYRROLINE-5-CARBOXYLATE SYNTHASE"/>
    <property type="match status" value="1"/>
</dbReference>
<dbReference type="PANTHER" id="PTHR11063">
    <property type="entry name" value="GLUTAMATE SEMIALDEHYDE DEHYDROGENASE"/>
    <property type="match status" value="1"/>
</dbReference>
<dbReference type="Pfam" id="PF00171">
    <property type="entry name" value="Aldedh"/>
    <property type="match status" value="1"/>
</dbReference>
<dbReference type="PIRSF" id="PIRSF000151">
    <property type="entry name" value="GPR"/>
    <property type="match status" value="1"/>
</dbReference>
<dbReference type="SUPFAM" id="SSF53720">
    <property type="entry name" value="ALDH-like"/>
    <property type="match status" value="1"/>
</dbReference>
<dbReference type="PROSITE" id="PS01223">
    <property type="entry name" value="PROA"/>
    <property type="match status" value="1"/>
</dbReference>
<organism>
    <name type="scientific">Neisseria meningitidis serogroup C / serotype 2a (strain ATCC 700532 / DSM 15464 / FAM18)</name>
    <dbReference type="NCBI Taxonomy" id="272831"/>
    <lineage>
        <taxon>Bacteria</taxon>
        <taxon>Pseudomonadati</taxon>
        <taxon>Pseudomonadota</taxon>
        <taxon>Betaproteobacteria</taxon>
        <taxon>Neisseriales</taxon>
        <taxon>Neisseriaceae</taxon>
        <taxon>Neisseria</taxon>
    </lineage>
</organism>
<accession>A1KTV4</accession>
<name>PROA_NEIMF</name>
<proteinExistence type="inferred from homology"/>
<feature type="chain" id="PRO_1000049970" description="Gamma-glutamyl phosphate reductase">
    <location>
        <begin position="1"/>
        <end position="420"/>
    </location>
</feature>
<reference key="1">
    <citation type="journal article" date="2007" name="PLoS Genet.">
        <title>Meningococcal genetic variation mechanisms viewed through comparative analysis of serogroup C strain FAM18.</title>
        <authorList>
            <person name="Bentley S.D."/>
            <person name="Vernikos G.S."/>
            <person name="Snyder L.A.S."/>
            <person name="Churcher C."/>
            <person name="Arrowsmith C."/>
            <person name="Chillingworth T."/>
            <person name="Cronin A."/>
            <person name="Davis P.H."/>
            <person name="Holroyd N.E."/>
            <person name="Jagels K."/>
            <person name="Maddison M."/>
            <person name="Moule S."/>
            <person name="Rabbinowitsch E."/>
            <person name="Sharp S."/>
            <person name="Unwin L."/>
            <person name="Whitehead S."/>
            <person name="Quail M.A."/>
            <person name="Achtman M."/>
            <person name="Barrell B.G."/>
            <person name="Saunders N.J."/>
            <person name="Parkhill J."/>
        </authorList>
    </citation>
    <scope>NUCLEOTIDE SEQUENCE [LARGE SCALE GENOMIC DNA]</scope>
    <source>
        <strain>ATCC 700532 / DSM 15464 / FAM18</strain>
    </source>
</reference>
<comment type="function">
    <text evidence="1">Catalyzes the NADPH-dependent reduction of L-glutamate 5-phosphate into L-glutamate 5-semialdehyde and phosphate. The product spontaneously undergoes cyclization to form 1-pyrroline-5-carboxylate.</text>
</comment>
<comment type="catalytic activity">
    <reaction evidence="1">
        <text>L-glutamate 5-semialdehyde + phosphate + NADP(+) = L-glutamyl 5-phosphate + NADPH + H(+)</text>
        <dbReference type="Rhea" id="RHEA:19541"/>
        <dbReference type="ChEBI" id="CHEBI:15378"/>
        <dbReference type="ChEBI" id="CHEBI:43474"/>
        <dbReference type="ChEBI" id="CHEBI:57783"/>
        <dbReference type="ChEBI" id="CHEBI:58066"/>
        <dbReference type="ChEBI" id="CHEBI:58274"/>
        <dbReference type="ChEBI" id="CHEBI:58349"/>
        <dbReference type="EC" id="1.2.1.41"/>
    </reaction>
</comment>
<comment type="pathway">
    <text evidence="1">Amino-acid biosynthesis; L-proline biosynthesis; L-glutamate 5-semialdehyde from L-glutamate: step 2/2.</text>
</comment>
<comment type="subcellular location">
    <subcellularLocation>
        <location evidence="1">Cytoplasm</location>
    </subcellularLocation>
</comment>
<comment type="similarity">
    <text evidence="1">Belongs to the gamma-glutamyl phosphate reductase family.</text>
</comment>
<gene>
    <name evidence="1" type="primary">proA</name>
    <name type="ordered locus">NMC1032</name>
</gene>
<evidence type="ECO:0000255" key="1">
    <source>
        <dbReference type="HAMAP-Rule" id="MF_00412"/>
    </source>
</evidence>
<sequence>MSNTQKQLALAKAAKKSVNTADTEEKNRALLAMADSLEAAAADILAANRQDLEAAAGKIPESMTDRLLLDGKRICAMADGIRAVAALPDPVGEILETSTLPNGLEIVKKRVAMGVIGIIYESRPNVTSDAAALALKSGSAVVLRSGKDAFQSARAIVAALKTGLAQTRIDPDALQLIEDTGREGSYEMMRAKDYLDLLIPRGGAGLIRAVVENAVVPVIETGTGIVHIYVDKDADLEKAIRIVRNAKTSRPSVCNSMEVLLVHEDIAADFLPKLERLLVRDRIEAGLPPVRFRLDPQAARHIGGEAAGADDFDTEFLDYILAVKTVASVEEAVGHIEAHGTHHSDGIVTENRHAADYFTTHIDSAAVYVNASTRFTDGGEFGLGCEMGISTQKLHARGPMGLKELTSYKYIVQGTGQVRE</sequence>
<protein>
    <recommendedName>
        <fullName evidence="1">Gamma-glutamyl phosphate reductase</fullName>
        <shortName evidence="1">GPR</shortName>
        <ecNumber evidence="1">1.2.1.41</ecNumber>
    </recommendedName>
    <alternativeName>
        <fullName evidence="1">Glutamate-5-semialdehyde dehydrogenase</fullName>
    </alternativeName>
    <alternativeName>
        <fullName evidence="1">Glutamyl-gamma-semialdehyde dehydrogenase</fullName>
        <shortName evidence="1">GSA dehydrogenase</shortName>
    </alternativeName>
</protein>